<sequence>MRKPIAAANWKMNGDFSLLDDFAQANITSDKCETIFALPSVLLDRAQKLGLNALAGQDVSAQVKGAFTGEISASMLKMLGCQYCIIGHSERRQYHHEDEALLIEKWRRLKEAEITPIYCIGELQAEYDAHATQQALERQLRPILEENLVDHKTIIAYEPVWAIGTGKAATPDYAQHVHQMIRQIVAQNYASIAPAMRLLYGGSVKPDNAGLLICQADIDGFLIGGASLDVGLFTKIIETMK</sequence>
<comment type="function">
    <text evidence="1">Involved in the gluconeogenesis. Catalyzes stereospecifically the conversion of dihydroxyacetone phosphate (DHAP) to D-glyceraldehyde-3-phosphate (G3P).</text>
</comment>
<comment type="catalytic activity">
    <reaction evidence="1">
        <text>D-glyceraldehyde 3-phosphate = dihydroxyacetone phosphate</text>
        <dbReference type="Rhea" id="RHEA:18585"/>
        <dbReference type="ChEBI" id="CHEBI:57642"/>
        <dbReference type="ChEBI" id="CHEBI:59776"/>
        <dbReference type="EC" id="5.3.1.1"/>
    </reaction>
</comment>
<comment type="pathway">
    <text evidence="1">Carbohydrate biosynthesis; gluconeogenesis.</text>
</comment>
<comment type="pathway">
    <text evidence="1">Carbohydrate degradation; glycolysis; D-glyceraldehyde 3-phosphate from glycerone phosphate: step 1/1.</text>
</comment>
<comment type="subunit">
    <text evidence="1">Homodimer.</text>
</comment>
<comment type="subcellular location">
    <subcellularLocation>
        <location evidence="1">Cytoplasm</location>
    </subcellularLocation>
</comment>
<comment type="similarity">
    <text evidence="1">Belongs to the triosephosphate isomerase family.</text>
</comment>
<organism>
    <name type="scientific">Dichelobacter nodosus (strain VCS1703A)</name>
    <dbReference type="NCBI Taxonomy" id="246195"/>
    <lineage>
        <taxon>Bacteria</taxon>
        <taxon>Pseudomonadati</taxon>
        <taxon>Pseudomonadota</taxon>
        <taxon>Gammaproteobacteria</taxon>
        <taxon>Cardiobacteriales</taxon>
        <taxon>Cardiobacteriaceae</taxon>
        <taxon>Dichelobacter</taxon>
    </lineage>
</organism>
<dbReference type="EC" id="5.3.1.1" evidence="1"/>
<dbReference type="EMBL" id="CP000513">
    <property type="protein sequence ID" value="ABQ13390.1"/>
    <property type="molecule type" value="Genomic_DNA"/>
</dbReference>
<dbReference type="RefSeq" id="WP_012031137.1">
    <property type="nucleotide sequence ID" value="NC_009446.1"/>
</dbReference>
<dbReference type="SMR" id="A5EUT5"/>
<dbReference type="STRING" id="246195.DNO_0814"/>
<dbReference type="KEGG" id="dno:DNO_0814"/>
<dbReference type="eggNOG" id="COG0149">
    <property type="taxonomic scope" value="Bacteria"/>
</dbReference>
<dbReference type="HOGENOM" id="CLU_024251_2_1_6"/>
<dbReference type="OrthoDB" id="9809429at2"/>
<dbReference type="UniPathway" id="UPA00109">
    <property type="reaction ID" value="UER00189"/>
</dbReference>
<dbReference type="UniPathway" id="UPA00138"/>
<dbReference type="Proteomes" id="UP000000248">
    <property type="component" value="Chromosome"/>
</dbReference>
<dbReference type="GO" id="GO:0005829">
    <property type="term" value="C:cytosol"/>
    <property type="evidence" value="ECO:0007669"/>
    <property type="project" value="TreeGrafter"/>
</dbReference>
<dbReference type="GO" id="GO:0004807">
    <property type="term" value="F:triose-phosphate isomerase activity"/>
    <property type="evidence" value="ECO:0007669"/>
    <property type="project" value="UniProtKB-UniRule"/>
</dbReference>
<dbReference type="GO" id="GO:0006094">
    <property type="term" value="P:gluconeogenesis"/>
    <property type="evidence" value="ECO:0007669"/>
    <property type="project" value="UniProtKB-UniRule"/>
</dbReference>
<dbReference type="GO" id="GO:0046166">
    <property type="term" value="P:glyceraldehyde-3-phosphate biosynthetic process"/>
    <property type="evidence" value="ECO:0007669"/>
    <property type="project" value="TreeGrafter"/>
</dbReference>
<dbReference type="GO" id="GO:0019563">
    <property type="term" value="P:glycerol catabolic process"/>
    <property type="evidence" value="ECO:0007669"/>
    <property type="project" value="TreeGrafter"/>
</dbReference>
<dbReference type="GO" id="GO:0006096">
    <property type="term" value="P:glycolytic process"/>
    <property type="evidence" value="ECO:0007669"/>
    <property type="project" value="UniProtKB-UniRule"/>
</dbReference>
<dbReference type="CDD" id="cd00311">
    <property type="entry name" value="TIM"/>
    <property type="match status" value="1"/>
</dbReference>
<dbReference type="Gene3D" id="3.20.20.70">
    <property type="entry name" value="Aldolase class I"/>
    <property type="match status" value="1"/>
</dbReference>
<dbReference type="HAMAP" id="MF_00147_B">
    <property type="entry name" value="TIM_B"/>
    <property type="match status" value="1"/>
</dbReference>
<dbReference type="InterPro" id="IPR013785">
    <property type="entry name" value="Aldolase_TIM"/>
</dbReference>
<dbReference type="InterPro" id="IPR035990">
    <property type="entry name" value="TIM_sf"/>
</dbReference>
<dbReference type="InterPro" id="IPR022896">
    <property type="entry name" value="TrioseP_Isoase_bac/euk"/>
</dbReference>
<dbReference type="InterPro" id="IPR000652">
    <property type="entry name" value="Triosephosphate_isomerase"/>
</dbReference>
<dbReference type="InterPro" id="IPR020861">
    <property type="entry name" value="Triosephosphate_isomerase_AS"/>
</dbReference>
<dbReference type="NCBIfam" id="TIGR00419">
    <property type="entry name" value="tim"/>
    <property type="match status" value="1"/>
</dbReference>
<dbReference type="PANTHER" id="PTHR21139">
    <property type="entry name" value="TRIOSEPHOSPHATE ISOMERASE"/>
    <property type="match status" value="1"/>
</dbReference>
<dbReference type="PANTHER" id="PTHR21139:SF42">
    <property type="entry name" value="TRIOSEPHOSPHATE ISOMERASE"/>
    <property type="match status" value="1"/>
</dbReference>
<dbReference type="Pfam" id="PF00121">
    <property type="entry name" value="TIM"/>
    <property type="match status" value="1"/>
</dbReference>
<dbReference type="SUPFAM" id="SSF51351">
    <property type="entry name" value="Triosephosphate isomerase (TIM)"/>
    <property type="match status" value="1"/>
</dbReference>
<dbReference type="PROSITE" id="PS00171">
    <property type="entry name" value="TIM_1"/>
    <property type="match status" value="1"/>
</dbReference>
<dbReference type="PROSITE" id="PS51440">
    <property type="entry name" value="TIM_2"/>
    <property type="match status" value="1"/>
</dbReference>
<proteinExistence type="inferred from homology"/>
<protein>
    <recommendedName>
        <fullName evidence="1">Triosephosphate isomerase</fullName>
        <shortName evidence="1">TIM</shortName>
        <shortName evidence="1">TPI</shortName>
        <ecNumber evidence="1">5.3.1.1</ecNumber>
    </recommendedName>
    <alternativeName>
        <fullName evidence="1">Triose-phosphate isomerase</fullName>
    </alternativeName>
</protein>
<evidence type="ECO:0000255" key="1">
    <source>
        <dbReference type="HAMAP-Rule" id="MF_00147"/>
    </source>
</evidence>
<name>TPIS_DICNV</name>
<feature type="chain" id="PRO_0000307460" description="Triosephosphate isomerase">
    <location>
        <begin position="1"/>
        <end position="241"/>
    </location>
</feature>
<feature type="active site" description="Electrophile" evidence="1">
    <location>
        <position position="88"/>
    </location>
</feature>
<feature type="active site" description="Proton acceptor" evidence="1">
    <location>
        <position position="158"/>
    </location>
</feature>
<feature type="binding site" evidence="1">
    <location>
        <begin position="9"/>
        <end position="11"/>
    </location>
    <ligand>
        <name>substrate</name>
    </ligand>
</feature>
<feature type="binding site" evidence="1">
    <location>
        <position position="164"/>
    </location>
    <ligand>
        <name>substrate</name>
    </ligand>
</feature>
<feature type="binding site" evidence="1">
    <location>
        <position position="203"/>
    </location>
    <ligand>
        <name>substrate</name>
    </ligand>
</feature>
<feature type="binding site" evidence="1">
    <location>
        <begin position="224"/>
        <end position="225"/>
    </location>
    <ligand>
        <name>substrate</name>
    </ligand>
</feature>
<keyword id="KW-0963">Cytoplasm</keyword>
<keyword id="KW-0312">Gluconeogenesis</keyword>
<keyword id="KW-0324">Glycolysis</keyword>
<keyword id="KW-0413">Isomerase</keyword>
<keyword id="KW-1185">Reference proteome</keyword>
<reference key="1">
    <citation type="journal article" date="2007" name="Nat. Biotechnol.">
        <title>Genome sequence and identification of candidate vaccine antigens from the animal pathogen Dichelobacter nodosus.</title>
        <authorList>
            <person name="Myers G.S.A."/>
            <person name="Parker D."/>
            <person name="Al-Hasani K."/>
            <person name="Kennan R.M."/>
            <person name="Seemann T."/>
            <person name="Ren Q."/>
            <person name="Badger J.H."/>
            <person name="Selengut J.D."/>
            <person name="Deboy R.T."/>
            <person name="Tettelin H."/>
            <person name="Boyce J.D."/>
            <person name="McCarl V.P."/>
            <person name="Han X."/>
            <person name="Nelson W.C."/>
            <person name="Madupu R."/>
            <person name="Mohamoud Y."/>
            <person name="Holley T."/>
            <person name="Fedorova N."/>
            <person name="Khouri H."/>
            <person name="Bottomley S.P."/>
            <person name="Whittington R.J."/>
            <person name="Adler B."/>
            <person name="Songer J.G."/>
            <person name="Rood J.I."/>
            <person name="Paulsen I.T."/>
        </authorList>
    </citation>
    <scope>NUCLEOTIDE SEQUENCE [LARGE SCALE GENOMIC DNA]</scope>
    <source>
        <strain>VCS1703A</strain>
    </source>
</reference>
<gene>
    <name evidence="1" type="primary">tpiA</name>
    <name type="ordered locus">DNO_0814</name>
</gene>
<accession>A5EUT5</accession>